<reference key="1">
    <citation type="journal article" date="1997" name="Gene">
        <title>Cloning and chromosomal mapping of four putative novel human G-protein-coupled receptor genes.</title>
        <authorList>
            <person name="O'Dowd B.F."/>
            <person name="Nguyen T."/>
            <person name="Jung B.P."/>
            <person name="Marchese A."/>
            <person name="Cheng R."/>
            <person name="Heng H.H.Q."/>
            <person name="Kolakowski L.F. Jr."/>
            <person name="Lynch K.R."/>
            <person name="George S.R."/>
        </authorList>
    </citation>
    <scope>NUCLEOTIDE SEQUENCE [GENOMIC DNA]</scope>
</reference>
<reference key="2">
    <citation type="journal article" date="2004" name="Nat. Genet.">
        <title>Complete sequencing and characterization of 21,243 full-length human cDNAs.</title>
        <authorList>
            <person name="Ota T."/>
            <person name="Suzuki Y."/>
            <person name="Nishikawa T."/>
            <person name="Otsuki T."/>
            <person name="Sugiyama T."/>
            <person name="Irie R."/>
            <person name="Wakamatsu A."/>
            <person name="Hayashi K."/>
            <person name="Sato H."/>
            <person name="Nagai K."/>
            <person name="Kimura K."/>
            <person name="Makita H."/>
            <person name="Sekine M."/>
            <person name="Obayashi M."/>
            <person name="Nishi T."/>
            <person name="Shibahara T."/>
            <person name="Tanaka T."/>
            <person name="Ishii S."/>
            <person name="Yamamoto J."/>
            <person name="Saito K."/>
            <person name="Kawai Y."/>
            <person name="Isono Y."/>
            <person name="Nakamura Y."/>
            <person name="Nagahari K."/>
            <person name="Murakami K."/>
            <person name="Yasuda T."/>
            <person name="Iwayanagi T."/>
            <person name="Wagatsuma M."/>
            <person name="Shiratori A."/>
            <person name="Sudo H."/>
            <person name="Hosoiri T."/>
            <person name="Kaku Y."/>
            <person name="Kodaira H."/>
            <person name="Kondo H."/>
            <person name="Sugawara M."/>
            <person name="Takahashi M."/>
            <person name="Kanda K."/>
            <person name="Yokoi T."/>
            <person name="Furuya T."/>
            <person name="Kikkawa E."/>
            <person name="Omura Y."/>
            <person name="Abe K."/>
            <person name="Kamihara K."/>
            <person name="Katsuta N."/>
            <person name="Sato K."/>
            <person name="Tanikawa M."/>
            <person name="Yamazaki M."/>
            <person name="Ninomiya K."/>
            <person name="Ishibashi T."/>
            <person name="Yamashita H."/>
            <person name="Murakawa K."/>
            <person name="Fujimori K."/>
            <person name="Tanai H."/>
            <person name="Kimata M."/>
            <person name="Watanabe M."/>
            <person name="Hiraoka S."/>
            <person name="Chiba Y."/>
            <person name="Ishida S."/>
            <person name="Ono Y."/>
            <person name="Takiguchi S."/>
            <person name="Watanabe S."/>
            <person name="Yosida M."/>
            <person name="Hotuta T."/>
            <person name="Kusano J."/>
            <person name="Kanehori K."/>
            <person name="Takahashi-Fujii A."/>
            <person name="Hara H."/>
            <person name="Tanase T.-O."/>
            <person name="Nomura Y."/>
            <person name="Togiya S."/>
            <person name="Komai F."/>
            <person name="Hara R."/>
            <person name="Takeuchi K."/>
            <person name="Arita M."/>
            <person name="Imose N."/>
            <person name="Musashino K."/>
            <person name="Yuuki H."/>
            <person name="Oshima A."/>
            <person name="Sasaki N."/>
            <person name="Aotsuka S."/>
            <person name="Yoshikawa Y."/>
            <person name="Matsunawa H."/>
            <person name="Ichihara T."/>
            <person name="Shiohata N."/>
            <person name="Sano S."/>
            <person name="Moriya S."/>
            <person name="Momiyama H."/>
            <person name="Satoh N."/>
            <person name="Takami S."/>
            <person name="Terashima Y."/>
            <person name="Suzuki O."/>
            <person name="Nakagawa S."/>
            <person name="Senoh A."/>
            <person name="Mizoguchi H."/>
            <person name="Goto Y."/>
            <person name="Shimizu F."/>
            <person name="Wakebe H."/>
            <person name="Hishigaki H."/>
            <person name="Watanabe T."/>
            <person name="Sugiyama A."/>
            <person name="Takemoto M."/>
            <person name="Kawakami B."/>
            <person name="Yamazaki M."/>
            <person name="Watanabe K."/>
            <person name="Kumagai A."/>
            <person name="Itakura S."/>
            <person name="Fukuzumi Y."/>
            <person name="Fujimori Y."/>
            <person name="Komiyama M."/>
            <person name="Tashiro H."/>
            <person name="Tanigami A."/>
            <person name="Fujiwara T."/>
            <person name="Ono T."/>
            <person name="Yamada K."/>
            <person name="Fujii Y."/>
            <person name="Ozaki K."/>
            <person name="Hirao M."/>
            <person name="Ohmori Y."/>
            <person name="Kawabata A."/>
            <person name="Hikiji T."/>
            <person name="Kobatake N."/>
            <person name="Inagaki H."/>
            <person name="Ikema Y."/>
            <person name="Okamoto S."/>
            <person name="Okitani R."/>
            <person name="Kawakami T."/>
            <person name="Noguchi S."/>
            <person name="Itoh T."/>
            <person name="Shigeta K."/>
            <person name="Senba T."/>
            <person name="Matsumura K."/>
            <person name="Nakajima Y."/>
            <person name="Mizuno T."/>
            <person name="Morinaga M."/>
            <person name="Sasaki M."/>
            <person name="Togashi T."/>
            <person name="Oyama M."/>
            <person name="Hata H."/>
            <person name="Watanabe M."/>
            <person name="Komatsu T."/>
            <person name="Mizushima-Sugano J."/>
            <person name="Satoh T."/>
            <person name="Shirai Y."/>
            <person name="Takahashi Y."/>
            <person name="Nakagawa K."/>
            <person name="Okumura K."/>
            <person name="Nagase T."/>
            <person name="Nomura N."/>
            <person name="Kikuchi H."/>
            <person name="Masuho Y."/>
            <person name="Yamashita R."/>
            <person name="Nakai K."/>
            <person name="Yada T."/>
            <person name="Nakamura Y."/>
            <person name="Ohara O."/>
            <person name="Isogai T."/>
            <person name="Sugano S."/>
        </authorList>
    </citation>
    <scope>NUCLEOTIDE SEQUENCE [LARGE SCALE MRNA]</scope>
    <source>
        <tissue>Brain</tissue>
    </source>
</reference>
<reference key="3">
    <citation type="submission" date="2005-07" db="EMBL/GenBank/DDBJ databases">
        <authorList>
            <person name="Mural R.J."/>
            <person name="Istrail S."/>
            <person name="Sutton G.G."/>
            <person name="Florea L."/>
            <person name="Halpern A.L."/>
            <person name="Mobarry C.M."/>
            <person name="Lippert R."/>
            <person name="Walenz B."/>
            <person name="Shatkay H."/>
            <person name="Dew I."/>
            <person name="Miller J.R."/>
            <person name="Flanigan M.J."/>
            <person name="Edwards N.J."/>
            <person name="Bolanos R."/>
            <person name="Fasulo D."/>
            <person name="Halldorsson B.V."/>
            <person name="Hannenhalli S."/>
            <person name="Turner R."/>
            <person name="Yooseph S."/>
            <person name="Lu F."/>
            <person name="Nusskern D.R."/>
            <person name="Shue B.C."/>
            <person name="Zheng X.H."/>
            <person name="Zhong F."/>
            <person name="Delcher A.L."/>
            <person name="Huson D.H."/>
            <person name="Kravitz S.A."/>
            <person name="Mouchard L."/>
            <person name="Reinert K."/>
            <person name="Remington K.A."/>
            <person name="Clark A.G."/>
            <person name="Waterman M.S."/>
            <person name="Eichler E.E."/>
            <person name="Adams M.D."/>
            <person name="Hunkapiller M.W."/>
            <person name="Myers E.W."/>
            <person name="Venter J.C."/>
        </authorList>
    </citation>
    <scope>NUCLEOTIDE SEQUENCE [LARGE SCALE GENOMIC DNA]</scope>
</reference>
<reference key="4">
    <citation type="journal article" date="2004" name="Genome Res.">
        <title>The status, quality, and expansion of the NIH full-length cDNA project: the Mammalian Gene Collection (MGC).</title>
        <authorList>
            <consortium name="The MGC Project Team"/>
        </authorList>
    </citation>
    <scope>NUCLEOTIDE SEQUENCE [LARGE SCALE MRNA]</scope>
</reference>
<keyword id="KW-0002">3D-structure</keyword>
<keyword id="KW-1003">Cell membrane</keyword>
<keyword id="KW-0297">G-protein coupled receptor</keyword>
<keyword id="KW-0325">Glycoprotein</keyword>
<keyword id="KW-0472">Membrane</keyword>
<keyword id="KW-0675">Receptor</keyword>
<keyword id="KW-1185">Reference proteome</keyword>
<keyword id="KW-0807">Transducer</keyword>
<keyword id="KW-0812">Transmembrane</keyword>
<keyword id="KW-1133">Transmembrane helix</keyword>
<accession>Q99679</accession>
<accession>B2R8W9</accession>
<accession>Q6NXU2</accession>
<comment type="function">
    <text>Orphan receptor.</text>
</comment>
<comment type="subcellular location">
    <subcellularLocation>
        <location>Cell membrane</location>
        <topology>Multi-pass membrane protein</topology>
    </subcellularLocation>
</comment>
<comment type="tissue specificity">
    <text>Not detected in the brain regions thalamus, putamen, caudate, frontal cortex, pons, hypothalamus, hippocampus.</text>
</comment>
<comment type="similarity">
    <text evidence="2">Belongs to the G-protein coupled receptor 1 family.</text>
</comment>
<organism>
    <name type="scientific">Homo sapiens</name>
    <name type="common">Human</name>
    <dbReference type="NCBI Taxonomy" id="9606"/>
    <lineage>
        <taxon>Eukaryota</taxon>
        <taxon>Metazoa</taxon>
        <taxon>Chordata</taxon>
        <taxon>Craniata</taxon>
        <taxon>Vertebrata</taxon>
        <taxon>Euteleostomi</taxon>
        <taxon>Mammalia</taxon>
        <taxon>Eutheria</taxon>
        <taxon>Euarchontoglires</taxon>
        <taxon>Primates</taxon>
        <taxon>Haplorrhini</taxon>
        <taxon>Catarrhini</taxon>
        <taxon>Hominidae</taxon>
        <taxon>Homo</taxon>
    </lineage>
</organism>
<feature type="chain" id="PRO_0000069542" description="Probable G-protein coupled receptor 21">
    <location>
        <begin position="1"/>
        <end position="349"/>
    </location>
</feature>
<feature type="topological domain" description="Extracellular" evidence="1">
    <location>
        <begin position="1"/>
        <end position="32"/>
    </location>
</feature>
<feature type="transmembrane region" description="Helical; Name=1" evidence="1">
    <location>
        <begin position="33"/>
        <end position="53"/>
    </location>
</feature>
<feature type="topological domain" description="Cytoplasmic" evidence="1">
    <location>
        <begin position="54"/>
        <end position="75"/>
    </location>
</feature>
<feature type="transmembrane region" description="Helical; Name=2" evidence="1">
    <location>
        <begin position="76"/>
        <end position="96"/>
    </location>
</feature>
<feature type="topological domain" description="Extracellular" evidence="1">
    <location>
        <begin position="97"/>
        <end position="104"/>
    </location>
</feature>
<feature type="transmembrane region" description="Helical; Name=3" evidence="1">
    <location>
        <begin position="105"/>
        <end position="125"/>
    </location>
</feature>
<feature type="topological domain" description="Cytoplasmic" evidence="1">
    <location>
        <begin position="126"/>
        <end position="147"/>
    </location>
</feature>
<feature type="transmembrane region" description="Helical; Name=4" evidence="1">
    <location>
        <begin position="148"/>
        <end position="168"/>
    </location>
</feature>
<feature type="topological domain" description="Extracellular" evidence="1">
    <location>
        <begin position="169"/>
        <end position="191"/>
    </location>
</feature>
<feature type="transmembrane region" description="Helical; Name=5" evidence="1">
    <location>
        <begin position="192"/>
        <end position="212"/>
    </location>
</feature>
<feature type="topological domain" description="Cytoplasmic" evidence="1">
    <location>
        <begin position="213"/>
        <end position="252"/>
    </location>
</feature>
<feature type="transmembrane region" description="Helical; Name=6" evidence="1">
    <location>
        <begin position="253"/>
        <end position="273"/>
    </location>
</feature>
<feature type="topological domain" description="Extracellular" evidence="1">
    <location>
        <begin position="274"/>
        <end position="283"/>
    </location>
</feature>
<feature type="transmembrane region" description="Helical; Name=7" evidence="1">
    <location>
        <begin position="284"/>
        <end position="304"/>
    </location>
</feature>
<feature type="topological domain" description="Cytoplasmic" evidence="1">
    <location>
        <begin position="305"/>
        <end position="349"/>
    </location>
</feature>
<feature type="glycosylation site" description="N-linked (GlcNAc...) asparagine" evidence="1">
    <location>
        <position position="2"/>
    </location>
</feature>
<feature type="glycosylation site" description="N-linked (GlcNAc...) asparagine" evidence="1">
    <location>
        <position position="8"/>
    </location>
</feature>
<feature type="helix" evidence="4">
    <location>
        <begin position="31"/>
        <end position="54"/>
    </location>
</feature>
<feature type="strand" evidence="3">
    <location>
        <begin position="57"/>
        <end position="61"/>
    </location>
</feature>
<feature type="helix" evidence="4">
    <location>
        <begin position="64"/>
        <end position="81"/>
    </location>
</feature>
<feature type="helix" evidence="4">
    <location>
        <begin position="84"/>
        <end position="89"/>
    </location>
</feature>
<feature type="helix" evidence="4">
    <location>
        <begin position="98"/>
        <end position="132"/>
    </location>
</feature>
<feature type="strand" evidence="4">
    <location>
        <begin position="133"/>
        <end position="136"/>
    </location>
</feature>
<feature type="helix" evidence="4">
    <location>
        <begin position="137"/>
        <end position="140"/>
    </location>
</feature>
<feature type="helix" evidence="4">
    <location>
        <begin position="143"/>
        <end position="160"/>
    </location>
</feature>
<feature type="helix" evidence="4">
    <location>
        <begin position="162"/>
        <end position="164"/>
    </location>
</feature>
<feature type="turn" evidence="4">
    <location>
        <begin position="165"/>
        <end position="168"/>
    </location>
</feature>
<feature type="helix" evidence="4">
    <location>
        <begin position="174"/>
        <end position="176"/>
    </location>
</feature>
<feature type="turn" evidence="4">
    <location>
        <begin position="179"/>
        <end position="183"/>
    </location>
</feature>
<feature type="helix" evidence="4">
    <location>
        <begin position="189"/>
        <end position="232"/>
    </location>
</feature>
<feature type="helix" evidence="4">
    <location>
        <begin position="250"/>
        <end position="277"/>
    </location>
</feature>
<feature type="helix" evidence="4">
    <location>
        <begin position="283"/>
        <end position="305"/>
    </location>
</feature>
<feature type="helix" evidence="4">
    <location>
        <begin position="309"/>
        <end position="316"/>
    </location>
</feature>
<evidence type="ECO:0000255" key="1"/>
<evidence type="ECO:0000255" key="2">
    <source>
        <dbReference type="PROSITE-ProRule" id="PRU00521"/>
    </source>
</evidence>
<evidence type="ECO:0007829" key="3">
    <source>
        <dbReference type="PDB" id="8HIX"/>
    </source>
</evidence>
<evidence type="ECO:0007829" key="4">
    <source>
        <dbReference type="PDB" id="8HMV"/>
    </source>
</evidence>
<protein>
    <recommendedName>
        <fullName>Probable G-protein coupled receptor 21</fullName>
    </recommendedName>
</protein>
<dbReference type="EMBL" id="U66580">
    <property type="protein sequence ID" value="AAC51303.1"/>
    <property type="molecule type" value="Genomic_DNA"/>
</dbReference>
<dbReference type="EMBL" id="AK313539">
    <property type="protein sequence ID" value="BAG36316.1"/>
    <property type="molecule type" value="mRNA"/>
</dbReference>
<dbReference type="EMBL" id="CH471090">
    <property type="protein sequence ID" value="EAW87559.1"/>
    <property type="molecule type" value="Genomic_DNA"/>
</dbReference>
<dbReference type="EMBL" id="BC066885">
    <property type="protein sequence ID" value="AAH66885.2"/>
    <property type="molecule type" value="mRNA"/>
</dbReference>
<dbReference type="EMBL" id="BC066886">
    <property type="protein sequence ID" value="AAH66886.2"/>
    <property type="molecule type" value="mRNA"/>
</dbReference>
<dbReference type="EMBL" id="BC067532">
    <property type="protein sequence ID" value="AAH67532.2"/>
    <property type="molecule type" value="mRNA"/>
</dbReference>
<dbReference type="EMBL" id="BC067533">
    <property type="protein sequence ID" value="AAH67533.2"/>
    <property type="molecule type" value="mRNA"/>
</dbReference>
<dbReference type="CCDS" id="CCDS6849.1"/>
<dbReference type="RefSeq" id="NP_005285.1">
    <property type="nucleotide sequence ID" value="NM_005294.3"/>
</dbReference>
<dbReference type="RefSeq" id="XP_005251990.1">
    <property type="nucleotide sequence ID" value="XM_005251933.5"/>
</dbReference>
<dbReference type="RefSeq" id="XP_054218737.1">
    <property type="nucleotide sequence ID" value="XM_054362762.1"/>
</dbReference>
<dbReference type="PDB" id="8HIX">
    <property type="method" value="EM"/>
    <property type="resolution" value="3.12 A"/>
    <property type="chains" value="R=1-327"/>
</dbReference>
<dbReference type="PDB" id="8HJ0">
    <property type="method" value="EM"/>
    <property type="resolution" value="3.12 A"/>
    <property type="chains" value="R=1-327"/>
</dbReference>
<dbReference type="PDB" id="8HJ1">
    <property type="method" value="EM"/>
    <property type="resolution" value="3.27 A"/>
    <property type="chains" value="R=1-349"/>
</dbReference>
<dbReference type="PDB" id="8HJ2">
    <property type="method" value="EM"/>
    <property type="resolution" value="3.80 A"/>
    <property type="chains" value="R=1-349"/>
</dbReference>
<dbReference type="PDB" id="8HMV">
    <property type="method" value="EM"/>
    <property type="resolution" value="2.91 A"/>
    <property type="chains" value="A=30-318"/>
</dbReference>
<dbReference type="PDBsum" id="8HIX"/>
<dbReference type="PDBsum" id="8HJ0"/>
<dbReference type="PDBsum" id="8HJ1"/>
<dbReference type="PDBsum" id="8HJ2"/>
<dbReference type="PDBsum" id="8HMV"/>
<dbReference type="EMDB" id="EMD-33480"/>
<dbReference type="EMDB" id="EMD-33481"/>
<dbReference type="EMDB" id="EMD-33482"/>
<dbReference type="EMDB" id="EMD-33483"/>
<dbReference type="EMDB" id="EMD-34903"/>
<dbReference type="SMR" id="Q99679"/>
<dbReference type="BioGRID" id="109103">
    <property type="interactions" value="82"/>
</dbReference>
<dbReference type="FunCoup" id="Q99679">
    <property type="interactions" value="520"/>
</dbReference>
<dbReference type="IntAct" id="Q99679">
    <property type="interactions" value="80"/>
</dbReference>
<dbReference type="STRING" id="9606.ENSP00000362746"/>
<dbReference type="ChEMBL" id="CHEMBL4523913"/>
<dbReference type="GlyCosmos" id="Q99679">
    <property type="glycosylation" value="2 sites, No reported glycans"/>
</dbReference>
<dbReference type="GlyGen" id="Q99679">
    <property type="glycosylation" value="2 sites"/>
</dbReference>
<dbReference type="iPTMnet" id="Q99679"/>
<dbReference type="PhosphoSitePlus" id="Q99679"/>
<dbReference type="BioMuta" id="GPR21"/>
<dbReference type="DMDM" id="2495040"/>
<dbReference type="PaxDb" id="9606-ENSP00000362746"/>
<dbReference type="PeptideAtlas" id="Q99679"/>
<dbReference type="ProteomicsDB" id="78393"/>
<dbReference type="Antibodypedia" id="30412">
    <property type="antibodies" value="80 antibodies from 15 providers"/>
</dbReference>
<dbReference type="DNASU" id="2844"/>
<dbReference type="Ensembl" id="ENST00000616002.3">
    <property type="protein sequence ID" value="ENSP00000482287.1"/>
    <property type="gene ID" value="ENSG00000188394.8"/>
</dbReference>
<dbReference type="GeneID" id="2844"/>
<dbReference type="KEGG" id="hsa:2844"/>
<dbReference type="MANE-Select" id="ENST00000616002.3">
    <property type="protein sequence ID" value="ENSP00000482287.1"/>
    <property type="RefSeq nucleotide sequence ID" value="NM_005294.3"/>
    <property type="RefSeq protein sequence ID" value="NP_005285.1"/>
</dbReference>
<dbReference type="UCSC" id="uc011lzk.3">
    <property type="organism name" value="human"/>
</dbReference>
<dbReference type="AGR" id="HGNC:4476"/>
<dbReference type="CTD" id="2844"/>
<dbReference type="DisGeNET" id="2844"/>
<dbReference type="GeneCards" id="GPR21"/>
<dbReference type="HGNC" id="HGNC:4476">
    <property type="gene designation" value="GPR21"/>
</dbReference>
<dbReference type="HPA" id="ENSG00000188394">
    <property type="expression patterns" value="Tissue enhanced (brain)"/>
</dbReference>
<dbReference type="MIM" id="601909">
    <property type="type" value="gene"/>
</dbReference>
<dbReference type="neXtProt" id="NX_Q99679"/>
<dbReference type="OpenTargets" id="ENSG00000188394"/>
<dbReference type="PharmGKB" id="PA28864"/>
<dbReference type="VEuPathDB" id="HostDB:ENSG00000188394"/>
<dbReference type="eggNOG" id="KOG3656">
    <property type="taxonomic scope" value="Eukaryota"/>
</dbReference>
<dbReference type="GeneTree" id="ENSGT00940000163543"/>
<dbReference type="HOGENOM" id="CLU_009579_3_3_1"/>
<dbReference type="InParanoid" id="Q99679"/>
<dbReference type="OMA" id="WCAESWR"/>
<dbReference type="OrthoDB" id="6376512at2759"/>
<dbReference type="PAN-GO" id="Q99679">
    <property type="GO annotations" value="0 GO annotations based on evolutionary models"/>
</dbReference>
<dbReference type="PhylomeDB" id="Q99679"/>
<dbReference type="TreeFam" id="TF332372"/>
<dbReference type="PathwayCommons" id="Q99679"/>
<dbReference type="SignaLink" id="Q99679"/>
<dbReference type="BioGRID-ORCS" id="2844">
    <property type="hits" value="8 hits in 1134 CRISPR screens"/>
</dbReference>
<dbReference type="GeneWiki" id="GPR21"/>
<dbReference type="GenomeRNAi" id="2844"/>
<dbReference type="Pharos" id="Q99679">
    <property type="development level" value="Tdark"/>
</dbReference>
<dbReference type="PRO" id="PR:Q99679"/>
<dbReference type="Proteomes" id="UP000005640">
    <property type="component" value="Chromosome 9"/>
</dbReference>
<dbReference type="RNAct" id="Q99679">
    <property type="molecule type" value="protein"/>
</dbReference>
<dbReference type="Bgee" id="ENSG00000188394">
    <property type="expression patterns" value="Expressed in male germ line stem cell (sensu Vertebrata) in testis and 111 other cell types or tissues"/>
</dbReference>
<dbReference type="ExpressionAtlas" id="Q99679">
    <property type="expression patterns" value="baseline"/>
</dbReference>
<dbReference type="GO" id="GO:0005886">
    <property type="term" value="C:plasma membrane"/>
    <property type="evidence" value="ECO:0000318"/>
    <property type="project" value="GO_Central"/>
</dbReference>
<dbReference type="GO" id="GO:0004930">
    <property type="term" value="F:G protein-coupled receptor activity"/>
    <property type="evidence" value="ECO:0000318"/>
    <property type="project" value="GO_Central"/>
</dbReference>
<dbReference type="GO" id="GO:0007186">
    <property type="term" value="P:G protein-coupled receptor signaling pathway"/>
    <property type="evidence" value="ECO:0000318"/>
    <property type="project" value="GO_Central"/>
</dbReference>
<dbReference type="GO" id="GO:0042593">
    <property type="term" value="P:glucose homeostasis"/>
    <property type="evidence" value="ECO:0007669"/>
    <property type="project" value="Ensembl"/>
</dbReference>
<dbReference type="GO" id="GO:0008286">
    <property type="term" value="P:insulin receptor signaling pathway"/>
    <property type="evidence" value="ECO:0007669"/>
    <property type="project" value="Ensembl"/>
</dbReference>
<dbReference type="GO" id="GO:0046627">
    <property type="term" value="P:negative regulation of insulin receptor signaling pathway"/>
    <property type="evidence" value="ECO:0007669"/>
    <property type="project" value="Ensembl"/>
</dbReference>
<dbReference type="GO" id="GO:0040018">
    <property type="term" value="P:positive regulation of multicellular organism growth"/>
    <property type="evidence" value="ECO:0007669"/>
    <property type="project" value="Ensembl"/>
</dbReference>
<dbReference type="CDD" id="cd00637">
    <property type="entry name" value="7tm_classA_rhodopsin-like"/>
    <property type="match status" value="1"/>
</dbReference>
<dbReference type="FunFam" id="1.20.1070.10:FF:000177">
    <property type="entry name" value="probable G-protein coupled receptor 52"/>
    <property type="match status" value="1"/>
</dbReference>
<dbReference type="Gene3D" id="1.20.1070.10">
    <property type="entry name" value="Rhodopsin 7-helix transmembrane proteins"/>
    <property type="match status" value="1"/>
</dbReference>
<dbReference type="InterPro" id="IPR000276">
    <property type="entry name" value="GPCR_Rhodpsn"/>
</dbReference>
<dbReference type="InterPro" id="IPR017452">
    <property type="entry name" value="GPCR_Rhodpsn_7TM"/>
</dbReference>
<dbReference type="InterPro" id="IPR050569">
    <property type="entry name" value="TAAR"/>
</dbReference>
<dbReference type="PANTHER" id="PTHR24249:SF384">
    <property type="entry name" value="G-PROTEIN COUPLED RECEPTOR 21-RELATED"/>
    <property type="match status" value="1"/>
</dbReference>
<dbReference type="PANTHER" id="PTHR24249">
    <property type="entry name" value="HISTAMINE RECEPTOR-RELATED G-PROTEIN COUPLED RECEPTOR"/>
    <property type="match status" value="1"/>
</dbReference>
<dbReference type="Pfam" id="PF00001">
    <property type="entry name" value="7tm_1"/>
    <property type="match status" value="1"/>
</dbReference>
<dbReference type="PRINTS" id="PR00237">
    <property type="entry name" value="GPCRRHODOPSN"/>
</dbReference>
<dbReference type="SUPFAM" id="SSF81321">
    <property type="entry name" value="Family A G protein-coupled receptor-like"/>
    <property type="match status" value="1"/>
</dbReference>
<dbReference type="PROSITE" id="PS00237">
    <property type="entry name" value="G_PROTEIN_RECEP_F1_1"/>
    <property type="match status" value="1"/>
</dbReference>
<dbReference type="PROSITE" id="PS50262">
    <property type="entry name" value="G_PROTEIN_RECEP_F1_2"/>
    <property type="match status" value="1"/>
</dbReference>
<name>GPR21_HUMAN</name>
<sequence>MNSTLDGNQSSHPFCLLAFGYLETVNFCLLEVLIIVFLTVLIISGNIIVIFVFHCAPLLNHHTTSYFIQTMAYADLFVGVSCVVPSLSLLHHPLPVEESLTCQIFGFVVSVLKSVSMASLACISIDRYIAITKPLTYNTLVTPWRLRLCIFLIWLYSTLVFLPSFFHWGKPGYHGDVFQWCAESWHTDSYFTLFIVMMLYAPAALIVCFTYFNIFRICQQHTKDISERQARFSSQSGETGEVQACPDKRYAMVLFRITSVFYILWLPYIIYFLLESSTGHSNRFASFLTTWLAISNSFCNCVIYSLSNSVFQRGLKRLSGAMCTSCASQTTANDPYTVRSKGPLNGCHI</sequence>
<gene>
    <name type="primary">GPR21</name>
</gene>
<proteinExistence type="evidence at protein level"/>